<gene>
    <name type="primary">PPE38</name>
    <name type="ordered locus">MT2419</name>
</gene>
<evidence type="ECO:0000305" key="1"/>
<proteinExistence type="inferred from homology"/>
<keyword id="KW-1185">Reference proteome</keyword>
<reference key="1">
    <citation type="journal article" date="2002" name="J. Bacteriol.">
        <title>Whole-genome comparison of Mycobacterium tuberculosis clinical and laboratory strains.</title>
        <authorList>
            <person name="Fleischmann R.D."/>
            <person name="Alland D."/>
            <person name="Eisen J.A."/>
            <person name="Carpenter L."/>
            <person name="White O."/>
            <person name="Peterson J.D."/>
            <person name="DeBoy R.T."/>
            <person name="Dodson R.J."/>
            <person name="Gwinn M.L."/>
            <person name="Haft D.H."/>
            <person name="Hickey E.K."/>
            <person name="Kolonay J.F."/>
            <person name="Nelson W.C."/>
            <person name="Umayam L.A."/>
            <person name="Ermolaeva M.D."/>
            <person name="Salzberg S.L."/>
            <person name="Delcher A."/>
            <person name="Utterback T.R."/>
            <person name="Weidman J.F."/>
            <person name="Khouri H.M."/>
            <person name="Gill J."/>
            <person name="Mikula A."/>
            <person name="Bishai W."/>
            <person name="Jacobs W.R. Jr."/>
            <person name="Venter J.C."/>
            <person name="Fraser C.M."/>
        </authorList>
    </citation>
    <scope>NUCLEOTIDE SEQUENCE [LARGE SCALE GENOMIC DNA]</scope>
    <source>
        <strain>CDC 1551 / Oshkosh</strain>
    </source>
</reference>
<comment type="similarity">
    <text evidence="1">Belongs to the mycobacterial PPE family.</text>
</comment>
<sequence length="391" mass="37355">MILDFSWLPPEINSARIYAGAGSGPLFMAAAAWEGLAADLRASASSFDAVIAGLAAGPWSGPASVAMAGAAAPYVGWLSAAAGQAELSAGQATAAATAFEAALAATVHPAAVTANRVLLGALVATNILGQNTPAIAATEFDYVEMWAQDVGAMVGYHAGAAAVAETLTPFSVPPLDLAGLASQAGAQLTGMATSVSAALSPIAEGAVEGVPAVVAAAQSVAAGLPVDAALQVGQAAAYPASMLIGPMMQLAQMGTTANTAGLAGAEAAGLAAADVPTFAGDIASGTGLGGAGGLGAGMSAELGKARLVGAMSVPPTWEGSVPARMASSAMAGLGAMPAEVPAAGGPMGMMPMPMGMGGAGAGMPAGMMGRGGANPHVVQARPSVVPRVGIG</sequence>
<organism>
    <name type="scientific">Mycobacterium tuberculosis (strain CDC 1551 / Oshkosh)</name>
    <dbReference type="NCBI Taxonomy" id="83331"/>
    <lineage>
        <taxon>Bacteria</taxon>
        <taxon>Bacillati</taxon>
        <taxon>Actinomycetota</taxon>
        <taxon>Actinomycetes</taxon>
        <taxon>Mycobacteriales</taxon>
        <taxon>Mycobacteriaceae</taxon>
        <taxon>Mycobacterium</taxon>
        <taxon>Mycobacterium tuberculosis complex</taxon>
    </lineage>
</organism>
<protein>
    <recommendedName>
        <fullName>Uncharacterized PPE family protein PPE38</fullName>
    </recommendedName>
</protein>
<feature type="chain" id="PRO_0000428094" description="Uncharacterized PPE family protein PPE38">
    <location>
        <begin position="1"/>
        <end position="391"/>
    </location>
</feature>
<name>PPE38_MYCTO</name>
<accession>P9WHZ8</accession>
<accession>L0T9K0</accession>
<accession>Q79FF4</accession>
<accession>Q7D7A2</accession>
<dbReference type="EMBL" id="AE000516">
    <property type="protein sequence ID" value="AAK46712.1"/>
    <property type="molecule type" value="Genomic_DNA"/>
</dbReference>
<dbReference type="PIR" id="A70663">
    <property type="entry name" value="A70663"/>
</dbReference>
<dbReference type="RefSeq" id="WP_003900505.1">
    <property type="nucleotide sequence ID" value="NZ_KK341227.1"/>
</dbReference>
<dbReference type="SMR" id="P9WHZ8"/>
<dbReference type="KEGG" id="mtc:MT2419"/>
<dbReference type="PATRIC" id="fig|83331.31.peg.2607"/>
<dbReference type="HOGENOM" id="CLU_000243_0_1_11"/>
<dbReference type="Proteomes" id="UP000001020">
    <property type="component" value="Chromosome"/>
</dbReference>
<dbReference type="GO" id="GO:0052572">
    <property type="term" value="P:response to host immune response"/>
    <property type="evidence" value="ECO:0007669"/>
    <property type="project" value="TreeGrafter"/>
</dbReference>
<dbReference type="FunFam" id="1.20.1260.20:FF:000001">
    <property type="entry name" value="PPE family protein PPE41"/>
    <property type="match status" value="1"/>
</dbReference>
<dbReference type="Gene3D" id="1.20.1260.20">
    <property type="entry name" value="PPE superfamily"/>
    <property type="match status" value="1"/>
</dbReference>
<dbReference type="InterPro" id="IPR022171">
    <property type="entry name" value="PPE_C"/>
</dbReference>
<dbReference type="InterPro" id="IPR000030">
    <property type="entry name" value="PPE_dom"/>
</dbReference>
<dbReference type="InterPro" id="IPR038332">
    <property type="entry name" value="PPE_sf"/>
</dbReference>
<dbReference type="PANTHER" id="PTHR46766">
    <property type="entry name" value="GLUTAMINE-RICH PROTEIN 2"/>
    <property type="match status" value="1"/>
</dbReference>
<dbReference type="PANTHER" id="PTHR46766:SF1">
    <property type="entry name" value="GLUTAMINE-RICH PROTEIN 2"/>
    <property type="match status" value="1"/>
</dbReference>
<dbReference type="Pfam" id="PF00823">
    <property type="entry name" value="PPE"/>
    <property type="match status" value="1"/>
</dbReference>
<dbReference type="Pfam" id="PF12484">
    <property type="entry name" value="PPE-SVP"/>
    <property type="match status" value="1"/>
</dbReference>
<dbReference type="SUPFAM" id="SSF140459">
    <property type="entry name" value="PE/PPE dimer-like"/>
    <property type="match status" value="1"/>
</dbReference>